<gene>
    <name evidence="1" type="primary">hemE</name>
    <name type="ordered locus">Shew_3422</name>
</gene>
<protein>
    <recommendedName>
        <fullName evidence="1">Uroporphyrinogen decarboxylase</fullName>
        <shortName evidence="1">UPD</shortName>
        <shortName evidence="1">URO-D</shortName>
        <ecNumber evidence="1">4.1.1.37</ecNumber>
    </recommendedName>
</protein>
<evidence type="ECO:0000255" key="1">
    <source>
        <dbReference type="HAMAP-Rule" id="MF_00218"/>
    </source>
</evidence>
<comment type="function">
    <text evidence="1">Catalyzes the decarboxylation of four acetate groups of uroporphyrinogen-III to yield coproporphyrinogen-III.</text>
</comment>
<comment type="catalytic activity">
    <reaction evidence="1">
        <text>uroporphyrinogen III + 4 H(+) = coproporphyrinogen III + 4 CO2</text>
        <dbReference type="Rhea" id="RHEA:19865"/>
        <dbReference type="ChEBI" id="CHEBI:15378"/>
        <dbReference type="ChEBI" id="CHEBI:16526"/>
        <dbReference type="ChEBI" id="CHEBI:57308"/>
        <dbReference type="ChEBI" id="CHEBI:57309"/>
        <dbReference type="EC" id="4.1.1.37"/>
    </reaction>
</comment>
<comment type="pathway">
    <text evidence="1">Porphyrin-containing compound metabolism; protoporphyrin-IX biosynthesis; coproporphyrinogen-III from 5-aminolevulinate: step 4/4.</text>
</comment>
<comment type="subunit">
    <text evidence="1">Homodimer.</text>
</comment>
<comment type="subcellular location">
    <subcellularLocation>
        <location evidence="1">Cytoplasm</location>
    </subcellularLocation>
</comment>
<comment type="similarity">
    <text evidence="1">Belongs to the uroporphyrinogen decarboxylase family.</text>
</comment>
<name>DCUP_SHELP</name>
<sequence length="354" mass="39242">MAELKNDRYLRALLKQPVDVTPVWMMRQAGRYLPEYKATRAQAGDFMSLCRNAELACEVTLQPLRRYDLDAAILFSDILTVPDAMGLGLYFETGEGPRFERPTDTLDAIKKLAVPDPEDELGYVMKAVSTIRRELKGEVPLIGFSGSPWTLATYMVEGGSSKTFEKIKKMAYAEPAALHMLLDKLADAVTLYLNAQVANGAQSLMIFDSWGGALSHTAYREFSLRYMQKIVDGLTRHADGRQVPVTLFTKGGGLWLEAMAETGCDALGLDWTVDIADARRRVGHKVALQGNMDPSMLYASPERIHEEVRQILAGYGEGSGHVFNLGHGIHQHVDPEHAGAFIKSVHELSAQYHK</sequence>
<feature type="chain" id="PRO_1000023971" description="Uroporphyrinogen decarboxylase">
    <location>
        <begin position="1"/>
        <end position="354"/>
    </location>
</feature>
<feature type="binding site" evidence="1">
    <location>
        <begin position="27"/>
        <end position="31"/>
    </location>
    <ligand>
        <name>substrate</name>
    </ligand>
</feature>
<feature type="binding site" evidence="1">
    <location>
        <position position="77"/>
    </location>
    <ligand>
        <name>substrate</name>
    </ligand>
</feature>
<feature type="binding site" evidence="1">
    <location>
        <position position="154"/>
    </location>
    <ligand>
        <name>substrate</name>
    </ligand>
</feature>
<feature type="binding site" evidence="1">
    <location>
        <position position="209"/>
    </location>
    <ligand>
        <name>substrate</name>
    </ligand>
</feature>
<feature type="binding site" evidence="1">
    <location>
        <position position="327"/>
    </location>
    <ligand>
        <name>substrate</name>
    </ligand>
</feature>
<feature type="site" description="Transition state stabilizer" evidence="1">
    <location>
        <position position="77"/>
    </location>
</feature>
<dbReference type="EC" id="4.1.1.37" evidence="1"/>
<dbReference type="EMBL" id="CP000606">
    <property type="protein sequence ID" value="ABO25288.1"/>
    <property type="molecule type" value="Genomic_DNA"/>
</dbReference>
<dbReference type="RefSeq" id="WP_011867218.1">
    <property type="nucleotide sequence ID" value="NC_009092.1"/>
</dbReference>
<dbReference type="SMR" id="A3QIJ0"/>
<dbReference type="STRING" id="323850.Shew_3422"/>
<dbReference type="KEGG" id="slo:Shew_3422"/>
<dbReference type="eggNOG" id="COG0407">
    <property type="taxonomic scope" value="Bacteria"/>
</dbReference>
<dbReference type="HOGENOM" id="CLU_040933_0_0_6"/>
<dbReference type="OrthoDB" id="9806656at2"/>
<dbReference type="UniPathway" id="UPA00251">
    <property type="reaction ID" value="UER00321"/>
</dbReference>
<dbReference type="Proteomes" id="UP000001558">
    <property type="component" value="Chromosome"/>
</dbReference>
<dbReference type="GO" id="GO:0005829">
    <property type="term" value="C:cytosol"/>
    <property type="evidence" value="ECO:0007669"/>
    <property type="project" value="TreeGrafter"/>
</dbReference>
<dbReference type="GO" id="GO:0004853">
    <property type="term" value="F:uroporphyrinogen decarboxylase activity"/>
    <property type="evidence" value="ECO:0007669"/>
    <property type="project" value="UniProtKB-UniRule"/>
</dbReference>
<dbReference type="GO" id="GO:0019353">
    <property type="term" value="P:protoporphyrinogen IX biosynthetic process from glutamate"/>
    <property type="evidence" value="ECO:0007669"/>
    <property type="project" value="TreeGrafter"/>
</dbReference>
<dbReference type="CDD" id="cd00717">
    <property type="entry name" value="URO-D"/>
    <property type="match status" value="1"/>
</dbReference>
<dbReference type="FunFam" id="3.20.20.210:FF:000001">
    <property type="entry name" value="Uroporphyrinogen decarboxylase"/>
    <property type="match status" value="1"/>
</dbReference>
<dbReference type="Gene3D" id="3.20.20.210">
    <property type="match status" value="1"/>
</dbReference>
<dbReference type="HAMAP" id="MF_00218">
    <property type="entry name" value="URO_D"/>
    <property type="match status" value="1"/>
</dbReference>
<dbReference type="InterPro" id="IPR038071">
    <property type="entry name" value="UROD/MetE-like_sf"/>
</dbReference>
<dbReference type="InterPro" id="IPR006361">
    <property type="entry name" value="Uroporphyrinogen_deCO2ase_HemE"/>
</dbReference>
<dbReference type="InterPro" id="IPR000257">
    <property type="entry name" value="Uroporphyrinogen_deCOase"/>
</dbReference>
<dbReference type="NCBIfam" id="TIGR01464">
    <property type="entry name" value="hemE"/>
    <property type="match status" value="1"/>
</dbReference>
<dbReference type="PANTHER" id="PTHR21091">
    <property type="entry name" value="METHYLTETRAHYDROFOLATE:HOMOCYSTEINE METHYLTRANSFERASE RELATED"/>
    <property type="match status" value="1"/>
</dbReference>
<dbReference type="PANTHER" id="PTHR21091:SF169">
    <property type="entry name" value="UROPORPHYRINOGEN DECARBOXYLASE"/>
    <property type="match status" value="1"/>
</dbReference>
<dbReference type="Pfam" id="PF01208">
    <property type="entry name" value="URO-D"/>
    <property type="match status" value="1"/>
</dbReference>
<dbReference type="SUPFAM" id="SSF51726">
    <property type="entry name" value="UROD/MetE-like"/>
    <property type="match status" value="1"/>
</dbReference>
<dbReference type="PROSITE" id="PS00906">
    <property type="entry name" value="UROD_1"/>
    <property type="match status" value="1"/>
</dbReference>
<dbReference type="PROSITE" id="PS00907">
    <property type="entry name" value="UROD_2"/>
    <property type="match status" value="1"/>
</dbReference>
<accession>A3QIJ0</accession>
<keyword id="KW-0963">Cytoplasm</keyword>
<keyword id="KW-0210">Decarboxylase</keyword>
<keyword id="KW-0456">Lyase</keyword>
<keyword id="KW-0627">Porphyrin biosynthesis</keyword>
<keyword id="KW-1185">Reference proteome</keyword>
<reference key="1">
    <citation type="submission" date="2007-03" db="EMBL/GenBank/DDBJ databases">
        <title>Complete sequence of Shewanella loihica PV-4.</title>
        <authorList>
            <consortium name="US DOE Joint Genome Institute"/>
            <person name="Copeland A."/>
            <person name="Lucas S."/>
            <person name="Lapidus A."/>
            <person name="Barry K."/>
            <person name="Detter J.C."/>
            <person name="Glavina del Rio T."/>
            <person name="Hammon N."/>
            <person name="Israni S."/>
            <person name="Dalin E."/>
            <person name="Tice H."/>
            <person name="Pitluck S."/>
            <person name="Chain P."/>
            <person name="Malfatti S."/>
            <person name="Shin M."/>
            <person name="Vergez L."/>
            <person name="Schmutz J."/>
            <person name="Larimer F."/>
            <person name="Land M."/>
            <person name="Hauser L."/>
            <person name="Kyrpides N."/>
            <person name="Mikhailova N."/>
            <person name="Romine M.F."/>
            <person name="Serres G."/>
            <person name="Fredrickson J."/>
            <person name="Tiedje J."/>
            <person name="Richardson P."/>
        </authorList>
    </citation>
    <scope>NUCLEOTIDE SEQUENCE [LARGE SCALE GENOMIC DNA]</scope>
    <source>
        <strain>ATCC BAA-1088 / PV-4</strain>
    </source>
</reference>
<proteinExistence type="inferred from homology"/>
<organism>
    <name type="scientific">Shewanella loihica (strain ATCC BAA-1088 / PV-4)</name>
    <dbReference type="NCBI Taxonomy" id="323850"/>
    <lineage>
        <taxon>Bacteria</taxon>
        <taxon>Pseudomonadati</taxon>
        <taxon>Pseudomonadota</taxon>
        <taxon>Gammaproteobacteria</taxon>
        <taxon>Alteromonadales</taxon>
        <taxon>Shewanellaceae</taxon>
        <taxon>Shewanella</taxon>
    </lineage>
</organism>